<accession>Q8N6S4</accession>
<accession>B3KQ97</accession>
<accession>Q5VYH4</accession>
<accession>Q5VYH5</accession>
<accession>Q6PJE4</accession>
<accession>Q9H0N9</accession>
<sequence length="541" mass="60818">MTGEKIRSLRRDHKPSKEEGDLLEPGDEEAAAALGGTFTRSRIGKGGKACHKIFSNHHHRLQLKAAPASSNPPGAPALPLHNSSVTANSQSPALLAGTNPVAVVADGGSCPAHYPVHECVFKGDVRRLSSLIRTHNIGQKDNHGNTPLHLAVMLGNKECAHLLLAHNAPVKVKNAQGWSPLAEAISYGDRQMITALLRKLKQQSRESVEEKRPRLLKALKELGDFYLELHWDFQSWVPLLSRILPSDACKIYKQGINIRLDTTLIDFTDMKCQRGDLSFIFNGDAAPSESFVVLDNEQKVYQRIHHEESEMETEEEVDILMSSDIYSATLSTKSISFTRAQTGWLFREDKTERVGNFLADFYLVNGLVLESRKRREHLSEEDILRNKAIMESLSKGGNIMEQNFEPIRRQSLTPPPQNTITWEEYISAENGKAPHLGRELVCKESKKTFKATIAMSQEFPLGIELLLNVLEVVAPFKHFNKLREFVQMKLPPGFPVKLDIPVFPTITATVTFQEFRYDEFDGSIFTIPDDYKEDPSRFPDL</sequence>
<protein>
    <recommendedName>
        <fullName>Ankyrin repeat domain-containing protein 13C</fullName>
    </recommendedName>
</protein>
<comment type="function">
    <text evidence="4">Acts as a molecular chaperone for G protein-coupled receptors, regulating their biogenesis and exit from the ER.</text>
</comment>
<comment type="interaction">
    <interactant intactId="EBI-11959451">
        <id>Q8N6S4</id>
    </interactant>
    <interactant intactId="EBI-11959453">
        <id>Q8NHS1</id>
        <label>CLDND2</label>
    </interactant>
    <organismsDiffer>false</organismsDiffer>
    <experiments>3</experiments>
</comment>
<comment type="subcellular location">
    <subcellularLocation>
        <location evidence="4">Endoplasmic reticulum membrane</location>
    </subcellularLocation>
    <text>Associated with the cytosolic side.</text>
</comment>
<comment type="alternative products">
    <event type="alternative splicing"/>
    <isoform>
        <id>Q8N6S4-1</id>
        <name>1</name>
        <sequence type="displayed"/>
    </isoform>
    <isoform>
        <id>Q8N6S4-2</id>
        <name>2</name>
        <sequence type="described" ref="VSP_019408"/>
    </isoform>
    <isoform>
        <id>Q8N6S4-3</id>
        <name>3</name>
        <sequence type="described" ref="VSP_019406 VSP_019407"/>
    </isoform>
</comment>
<comment type="sequence caution" evidence="7">
    <conflict type="erroneous initiation">
        <sequence resource="EMBL-CDS" id="BAG51959"/>
    </conflict>
    <text>Truncated N-terminus.</text>
</comment>
<organism>
    <name type="scientific">Homo sapiens</name>
    <name type="common">Human</name>
    <dbReference type="NCBI Taxonomy" id="9606"/>
    <lineage>
        <taxon>Eukaryota</taxon>
        <taxon>Metazoa</taxon>
        <taxon>Chordata</taxon>
        <taxon>Craniata</taxon>
        <taxon>Vertebrata</taxon>
        <taxon>Euteleostomi</taxon>
        <taxon>Mammalia</taxon>
        <taxon>Eutheria</taxon>
        <taxon>Euarchontoglires</taxon>
        <taxon>Primates</taxon>
        <taxon>Haplorrhini</taxon>
        <taxon>Catarrhini</taxon>
        <taxon>Hominidae</taxon>
        <taxon>Homo</taxon>
    </lineage>
</organism>
<feature type="chain" id="PRO_0000240645" description="Ankyrin repeat domain-containing protein 13C">
    <location>
        <begin position="1"/>
        <end position="541"/>
    </location>
</feature>
<feature type="repeat" description="ANK 1">
    <location>
        <begin position="111"/>
        <end position="142"/>
    </location>
</feature>
<feature type="repeat" description="ANK 2">
    <location>
        <begin position="143"/>
        <end position="172"/>
    </location>
</feature>
<feature type="repeat" description="ANK 3">
    <location>
        <begin position="176"/>
        <end position="205"/>
    </location>
</feature>
<feature type="region of interest" description="Disordered" evidence="2">
    <location>
        <begin position="1"/>
        <end position="27"/>
    </location>
</feature>
<feature type="compositionally biased region" description="Basic and acidic residues" evidence="2">
    <location>
        <begin position="1"/>
        <end position="20"/>
    </location>
</feature>
<feature type="modified residue" description="Phosphoserine" evidence="1">
    <location>
        <position position="411"/>
    </location>
</feature>
<feature type="splice variant" id="VSP_019406" description="In isoform 3." evidence="6">
    <original>NTP</original>
    <variation>EEC</variation>
    <location>
        <begin position="145"/>
        <end position="147"/>
    </location>
</feature>
<feature type="splice variant" id="VSP_019407" description="In isoform 3." evidence="6">
    <location>
        <begin position="148"/>
        <end position="541"/>
    </location>
</feature>
<feature type="splice variant" id="VSP_019408" description="In isoform 2." evidence="5">
    <original>ECAHLLLAHNAPVKVKNAQGWSPLAEAISYGDRQMI</original>
    <variation>V</variation>
    <location>
        <begin position="158"/>
        <end position="193"/>
    </location>
</feature>
<feature type="sequence variant" id="VAR_026825" description="In dbSNP:rs17852616." evidence="3">
    <original>T</original>
    <variation>S</variation>
    <location>
        <position position="413"/>
    </location>
</feature>
<feature type="sequence conflict" description="In Ref. 1; CAB66651." evidence="7" ref="1">
    <original>L</original>
    <variation>I</variation>
    <location>
        <position position="369"/>
    </location>
</feature>
<evidence type="ECO:0000250" key="1">
    <source>
        <dbReference type="UniProtKB" id="Q3UX43"/>
    </source>
</evidence>
<evidence type="ECO:0000256" key="2">
    <source>
        <dbReference type="SAM" id="MobiDB-lite"/>
    </source>
</evidence>
<evidence type="ECO:0000269" key="3">
    <source>
    </source>
</evidence>
<evidence type="ECO:0000269" key="4">
    <source>
    </source>
</evidence>
<evidence type="ECO:0000303" key="5">
    <source>
    </source>
</evidence>
<evidence type="ECO:0000303" key="6">
    <source>
    </source>
</evidence>
<evidence type="ECO:0000305" key="7"/>
<keyword id="KW-0025">Alternative splicing</keyword>
<keyword id="KW-0040">ANK repeat</keyword>
<keyword id="KW-0143">Chaperone</keyword>
<keyword id="KW-0256">Endoplasmic reticulum</keyword>
<keyword id="KW-0472">Membrane</keyword>
<keyword id="KW-0597">Phosphoprotein</keyword>
<keyword id="KW-1267">Proteomics identification</keyword>
<keyword id="KW-1185">Reference proteome</keyword>
<keyword id="KW-0677">Repeat</keyword>
<dbReference type="EMBL" id="AL136717">
    <property type="protein sequence ID" value="CAB66651.1"/>
    <property type="molecule type" value="mRNA"/>
</dbReference>
<dbReference type="EMBL" id="AL158839">
    <property type="status" value="NOT_ANNOTATED_CDS"/>
    <property type="molecule type" value="Genomic_DNA"/>
</dbReference>
<dbReference type="EMBL" id="AL353771">
    <property type="status" value="NOT_ANNOTATED_CDS"/>
    <property type="molecule type" value="Genomic_DNA"/>
</dbReference>
<dbReference type="EMBL" id="AL354721">
    <property type="status" value="NOT_ANNOTATED_CDS"/>
    <property type="molecule type" value="Genomic_DNA"/>
</dbReference>
<dbReference type="EMBL" id="BC016937">
    <property type="protein sequence ID" value="AAH16937.1"/>
    <property type="molecule type" value="mRNA"/>
</dbReference>
<dbReference type="EMBL" id="BC028840">
    <property type="protein sequence ID" value="AAH28840.1"/>
    <property type="molecule type" value="mRNA"/>
</dbReference>
<dbReference type="EMBL" id="AK074187">
    <property type="protein sequence ID" value="BAG51959.1"/>
    <property type="status" value="ALT_INIT"/>
    <property type="molecule type" value="mRNA"/>
</dbReference>
<dbReference type="CCDS" id="CCDS648.2">
    <molecule id="Q8N6S4-1"/>
</dbReference>
<dbReference type="RefSeq" id="NP_110443.3">
    <molecule id="Q8N6S4-1"/>
    <property type="nucleotide sequence ID" value="NM_030816.5"/>
</dbReference>
<dbReference type="SMR" id="Q8N6S4"/>
<dbReference type="BioGRID" id="123534">
    <property type="interactions" value="19"/>
</dbReference>
<dbReference type="FunCoup" id="Q8N6S4">
    <property type="interactions" value="3754"/>
</dbReference>
<dbReference type="IntAct" id="Q8N6S4">
    <property type="interactions" value="15"/>
</dbReference>
<dbReference type="MINT" id="Q8N6S4"/>
<dbReference type="STRING" id="9606.ENSP00000359982"/>
<dbReference type="iPTMnet" id="Q8N6S4"/>
<dbReference type="PhosphoSitePlus" id="Q8N6S4"/>
<dbReference type="BioMuta" id="ANKRD13C"/>
<dbReference type="DMDM" id="109940205"/>
<dbReference type="jPOST" id="Q8N6S4"/>
<dbReference type="MassIVE" id="Q8N6S4"/>
<dbReference type="PaxDb" id="9606-ENSP00000359982"/>
<dbReference type="PeptideAtlas" id="Q8N6S4"/>
<dbReference type="ProteomicsDB" id="72222">
    <molecule id="Q8N6S4-1"/>
</dbReference>
<dbReference type="ProteomicsDB" id="72223">
    <molecule id="Q8N6S4-2"/>
</dbReference>
<dbReference type="Pumba" id="Q8N6S4"/>
<dbReference type="Antibodypedia" id="33431">
    <property type="antibodies" value="80 antibodies from 17 providers"/>
</dbReference>
<dbReference type="DNASU" id="81573"/>
<dbReference type="Ensembl" id="ENST00000262346.6">
    <molecule id="Q8N6S4-2"/>
    <property type="protein sequence ID" value="ENSP00000262346.6"/>
    <property type="gene ID" value="ENSG00000118454.13"/>
</dbReference>
<dbReference type="Ensembl" id="ENST00000370944.9">
    <molecule id="Q8N6S4-1"/>
    <property type="protein sequence ID" value="ENSP00000359982.4"/>
    <property type="gene ID" value="ENSG00000118454.13"/>
</dbReference>
<dbReference type="GeneID" id="81573"/>
<dbReference type="KEGG" id="hsa:81573"/>
<dbReference type="MANE-Select" id="ENST00000370944.9">
    <property type="protein sequence ID" value="ENSP00000359982.4"/>
    <property type="RefSeq nucleotide sequence ID" value="NM_030816.5"/>
    <property type="RefSeq protein sequence ID" value="NP_110443.3"/>
</dbReference>
<dbReference type="UCSC" id="uc001dex.5">
    <molecule id="Q8N6S4-1"/>
    <property type="organism name" value="human"/>
</dbReference>
<dbReference type="AGR" id="HGNC:25374"/>
<dbReference type="CTD" id="81573"/>
<dbReference type="GeneCards" id="ANKRD13C"/>
<dbReference type="HGNC" id="HGNC:25374">
    <property type="gene designation" value="ANKRD13C"/>
</dbReference>
<dbReference type="HPA" id="ENSG00000118454">
    <property type="expression patterns" value="Low tissue specificity"/>
</dbReference>
<dbReference type="MIM" id="615125">
    <property type="type" value="gene"/>
</dbReference>
<dbReference type="neXtProt" id="NX_Q8N6S4"/>
<dbReference type="OpenTargets" id="ENSG00000118454"/>
<dbReference type="PharmGKB" id="PA142672617"/>
<dbReference type="VEuPathDB" id="HostDB:ENSG00000118454"/>
<dbReference type="eggNOG" id="KOG0522">
    <property type="taxonomic scope" value="Eukaryota"/>
</dbReference>
<dbReference type="GeneTree" id="ENSGT00950000182928"/>
<dbReference type="HOGENOM" id="CLU_026137_1_0_1"/>
<dbReference type="InParanoid" id="Q8N6S4"/>
<dbReference type="OMA" id="YPMHQSV"/>
<dbReference type="OrthoDB" id="1585644at2759"/>
<dbReference type="PAN-GO" id="Q8N6S4">
    <property type="GO annotations" value="3 GO annotations based on evolutionary models"/>
</dbReference>
<dbReference type="PhylomeDB" id="Q8N6S4"/>
<dbReference type="TreeFam" id="TF314176"/>
<dbReference type="PathwayCommons" id="Q8N6S4"/>
<dbReference type="SignaLink" id="Q8N6S4"/>
<dbReference type="BioGRID-ORCS" id="81573">
    <property type="hits" value="14 hits in 1155 CRISPR screens"/>
</dbReference>
<dbReference type="ChiTaRS" id="ANKRD13C">
    <property type="organism name" value="human"/>
</dbReference>
<dbReference type="GeneWiki" id="ANKRD13C"/>
<dbReference type="GenomeRNAi" id="81573"/>
<dbReference type="Pharos" id="Q8N6S4">
    <property type="development level" value="Tbio"/>
</dbReference>
<dbReference type="PRO" id="PR:Q8N6S4"/>
<dbReference type="Proteomes" id="UP000005640">
    <property type="component" value="Chromosome 1"/>
</dbReference>
<dbReference type="RNAct" id="Q8N6S4">
    <property type="molecule type" value="protein"/>
</dbReference>
<dbReference type="Bgee" id="ENSG00000118454">
    <property type="expression patterns" value="Expressed in calcaneal tendon and 182 other cell types or tissues"/>
</dbReference>
<dbReference type="GO" id="GO:0005737">
    <property type="term" value="C:cytoplasm"/>
    <property type="evidence" value="ECO:0000318"/>
    <property type="project" value="GO_Central"/>
</dbReference>
<dbReference type="GO" id="GO:0005783">
    <property type="term" value="C:endoplasmic reticulum"/>
    <property type="evidence" value="ECO:0000314"/>
    <property type="project" value="LIFEdb"/>
</dbReference>
<dbReference type="GO" id="GO:0005789">
    <property type="term" value="C:endoplasmic reticulum membrane"/>
    <property type="evidence" value="ECO:0007669"/>
    <property type="project" value="UniProtKB-SubCell"/>
</dbReference>
<dbReference type="GO" id="GO:0048471">
    <property type="term" value="C:perinuclear region of cytoplasm"/>
    <property type="evidence" value="ECO:0000314"/>
    <property type="project" value="BHF-UCL"/>
</dbReference>
<dbReference type="GO" id="GO:0140597">
    <property type="term" value="F:protein carrier chaperone"/>
    <property type="evidence" value="ECO:0000314"/>
    <property type="project" value="BHF-UCL"/>
</dbReference>
<dbReference type="GO" id="GO:0005102">
    <property type="term" value="F:signaling receptor binding"/>
    <property type="evidence" value="ECO:0000353"/>
    <property type="project" value="BHF-UCL"/>
</dbReference>
<dbReference type="GO" id="GO:0071799">
    <property type="term" value="P:cellular response to prostaglandin D stimulus"/>
    <property type="evidence" value="ECO:0000314"/>
    <property type="project" value="BHF-UCL"/>
</dbReference>
<dbReference type="GO" id="GO:0006621">
    <property type="term" value="P:protein retention in ER lumen"/>
    <property type="evidence" value="ECO:0000318"/>
    <property type="project" value="GO_Central"/>
</dbReference>
<dbReference type="GO" id="GO:0006612">
    <property type="term" value="P:protein targeting to membrane"/>
    <property type="evidence" value="ECO:0000315"/>
    <property type="project" value="BHF-UCL"/>
</dbReference>
<dbReference type="GO" id="GO:2000209">
    <property type="term" value="P:regulation of anoikis"/>
    <property type="evidence" value="ECO:0000314"/>
    <property type="project" value="BHF-UCL"/>
</dbReference>
<dbReference type="FunFam" id="1.25.40.20:FF:000073">
    <property type="entry name" value="Ankyrin repeat domain-containing protein 13C"/>
    <property type="match status" value="1"/>
</dbReference>
<dbReference type="Gene3D" id="1.25.40.20">
    <property type="entry name" value="Ankyrin repeat-containing domain"/>
    <property type="match status" value="1"/>
</dbReference>
<dbReference type="InterPro" id="IPR021832">
    <property type="entry name" value="ANKRD13"/>
</dbReference>
<dbReference type="InterPro" id="IPR055285">
    <property type="entry name" value="ANKRD13_C"/>
</dbReference>
<dbReference type="InterPro" id="IPR002110">
    <property type="entry name" value="Ankyrin_rpt"/>
</dbReference>
<dbReference type="InterPro" id="IPR036770">
    <property type="entry name" value="Ankyrin_rpt-contain_sf"/>
</dbReference>
<dbReference type="PANTHER" id="PTHR12447">
    <property type="entry name" value="ANKYRIN REPEAT DOMAIN-CONTAINING PROTEIN 13"/>
    <property type="match status" value="1"/>
</dbReference>
<dbReference type="PANTHER" id="PTHR12447:SF25">
    <property type="entry name" value="ANKYRIN REPEAT DOMAIN-CONTAINING PROTEIN 13C"/>
    <property type="match status" value="1"/>
</dbReference>
<dbReference type="Pfam" id="PF12796">
    <property type="entry name" value="Ank_2"/>
    <property type="match status" value="1"/>
</dbReference>
<dbReference type="Pfam" id="PF11904">
    <property type="entry name" value="ANKRD13_C"/>
    <property type="match status" value="1"/>
</dbReference>
<dbReference type="SMART" id="SM00248">
    <property type="entry name" value="ANK"/>
    <property type="match status" value="2"/>
</dbReference>
<dbReference type="SUPFAM" id="SSF48403">
    <property type="entry name" value="Ankyrin repeat"/>
    <property type="match status" value="1"/>
</dbReference>
<dbReference type="PROSITE" id="PS50297">
    <property type="entry name" value="ANK_REP_REGION"/>
    <property type="match status" value="1"/>
</dbReference>
<dbReference type="PROSITE" id="PS50088">
    <property type="entry name" value="ANK_REPEAT"/>
    <property type="match status" value="1"/>
</dbReference>
<proteinExistence type="evidence at protein level"/>
<gene>
    <name type="primary">ANKRD13C</name>
</gene>
<reference key="1">
    <citation type="journal article" date="2001" name="Genome Res.">
        <title>Towards a catalog of human genes and proteins: sequencing and analysis of 500 novel complete protein coding human cDNAs.</title>
        <authorList>
            <person name="Wiemann S."/>
            <person name="Weil B."/>
            <person name="Wellenreuther R."/>
            <person name="Gassenhuber J."/>
            <person name="Glassl S."/>
            <person name="Ansorge W."/>
            <person name="Boecher M."/>
            <person name="Bloecker H."/>
            <person name="Bauersachs S."/>
            <person name="Blum H."/>
            <person name="Lauber J."/>
            <person name="Duesterhoeft A."/>
            <person name="Beyer A."/>
            <person name="Koehrer K."/>
            <person name="Strack N."/>
            <person name="Mewes H.-W."/>
            <person name="Ottenwaelder B."/>
            <person name="Obermaier B."/>
            <person name="Tampe J."/>
            <person name="Heubner D."/>
            <person name="Wambutt R."/>
            <person name="Korn B."/>
            <person name="Klein M."/>
            <person name="Poustka A."/>
        </authorList>
    </citation>
    <scope>NUCLEOTIDE SEQUENCE [LARGE SCALE MRNA] (ISOFORM 2)</scope>
    <source>
        <tissue>Kidney</tissue>
    </source>
</reference>
<reference key="2">
    <citation type="journal article" date="2006" name="Nature">
        <title>The DNA sequence and biological annotation of human chromosome 1.</title>
        <authorList>
            <person name="Gregory S.G."/>
            <person name="Barlow K.F."/>
            <person name="McLay K.E."/>
            <person name="Kaul R."/>
            <person name="Swarbreck D."/>
            <person name="Dunham A."/>
            <person name="Scott C.E."/>
            <person name="Howe K.L."/>
            <person name="Woodfine K."/>
            <person name="Spencer C.C.A."/>
            <person name="Jones M.C."/>
            <person name="Gillson C."/>
            <person name="Searle S."/>
            <person name="Zhou Y."/>
            <person name="Kokocinski F."/>
            <person name="McDonald L."/>
            <person name="Evans R."/>
            <person name="Phillips K."/>
            <person name="Atkinson A."/>
            <person name="Cooper R."/>
            <person name="Jones C."/>
            <person name="Hall R.E."/>
            <person name="Andrews T.D."/>
            <person name="Lloyd C."/>
            <person name="Ainscough R."/>
            <person name="Almeida J.P."/>
            <person name="Ambrose K.D."/>
            <person name="Anderson F."/>
            <person name="Andrew R.W."/>
            <person name="Ashwell R.I.S."/>
            <person name="Aubin K."/>
            <person name="Babbage A.K."/>
            <person name="Bagguley C.L."/>
            <person name="Bailey J."/>
            <person name="Beasley H."/>
            <person name="Bethel G."/>
            <person name="Bird C.P."/>
            <person name="Bray-Allen S."/>
            <person name="Brown J.Y."/>
            <person name="Brown A.J."/>
            <person name="Buckley D."/>
            <person name="Burton J."/>
            <person name="Bye J."/>
            <person name="Carder C."/>
            <person name="Chapman J.C."/>
            <person name="Clark S.Y."/>
            <person name="Clarke G."/>
            <person name="Clee C."/>
            <person name="Cobley V."/>
            <person name="Collier R.E."/>
            <person name="Corby N."/>
            <person name="Coville G.J."/>
            <person name="Davies J."/>
            <person name="Deadman R."/>
            <person name="Dunn M."/>
            <person name="Earthrowl M."/>
            <person name="Ellington A.G."/>
            <person name="Errington H."/>
            <person name="Frankish A."/>
            <person name="Frankland J."/>
            <person name="French L."/>
            <person name="Garner P."/>
            <person name="Garnett J."/>
            <person name="Gay L."/>
            <person name="Ghori M.R.J."/>
            <person name="Gibson R."/>
            <person name="Gilby L.M."/>
            <person name="Gillett W."/>
            <person name="Glithero R.J."/>
            <person name="Grafham D.V."/>
            <person name="Griffiths C."/>
            <person name="Griffiths-Jones S."/>
            <person name="Grocock R."/>
            <person name="Hammond S."/>
            <person name="Harrison E.S.I."/>
            <person name="Hart E."/>
            <person name="Haugen E."/>
            <person name="Heath P.D."/>
            <person name="Holmes S."/>
            <person name="Holt K."/>
            <person name="Howden P.J."/>
            <person name="Hunt A.R."/>
            <person name="Hunt S.E."/>
            <person name="Hunter G."/>
            <person name="Isherwood J."/>
            <person name="James R."/>
            <person name="Johnson C."/>
            <person name="Johnson D."/>
            <person name="Joy A."/>
            <person name="Kay M."/>
            <person name="Kershaw J.K."/>
            <person name="Kibukawa M."/>
            <person name="Kimberley A.M."/>
            <person name="King A."/>
            <person name="Knights A.J."/>
            <person name="Lad H."/>
            <person name="Laird G."/>
            <person name="Lawlor S."/>
            <person name="Leongamornlert D.A."/>
            <person name="Lloyd D.M."/>
            <person name="Loveland J."/>
            <person name="Lovell J."/>
            <person name="Lush M.J."/>
            <person name="Lyne R."/>
            <person name="Martin S."/>
            <person name="Mashreghi-Mohammadi M."/>
            <person name="Matthews L."/>
            <person name="Matthews N.S.W."/>
            <person name="McLaren S."/>
            <person name="Milne S."/>
            <person name="Mistry S."/>
            <person name="Moore M.J.F."/>
            <person name="Nickerson T."/>
            <person name="O'Dell C.N."/>
            <person name="Oliver K."/>
            <person name="Palmeiri A."/>
            <person name="Palmer S.A."/>
            <person name="Parker A."/>
            <person name="Patel D."/>
            <person name="Pearce A.V."/>
            <person name="Peck A.I."/>
            <person name="Pelan S."/>
            <person name="Phelps K."/>
            <person name="Phillimore B.J."/>
            <person name="Plumb R."/>
            <person name="Rajan J."/>
            <person name="Raymond C."/>
            <person name="Rouse G."/>
            <person name="Saenphimmachak C."/>
            <person name="Sehra H.K."/>
            <person name="Sheridan E."/>
            <person name="Shownkeen R."/>
            <person name="Sims S."/>
            <person name="Skuce C.D."/>
            <person name="Smith M."/>
            <person name="Steward C."/>
            <person name="Subramanian S."/>
            <person name="Sycamore N."/>
            <person name="Tracey A."/>
            <person name="Tromans A."/>
            <person name="Van Helmond Z."/>
            <person name="Wall M."/>
            <person name="Wallis J.M."/>
            <person name="White S."/>
            <person name="Whitehead S.L."/>
            <person name="Wilkinson J.E."/>
            <person name="Willey D.L."/>
            <person name="Williams H."/>
            <person name="Wilming L."/>
            <person name="Wray P.W."/>
            <person name="Wu Z."/>
            <person name="Coulson A."/>
            <person name="Vaudin M."/>
            <person name="Sulston J.E."/>
            <person name="Durbin R.M."/>
            <person name="Hubbard T."/>
            <person name="Wooster R."/>
            <person name="Dunham I."/>
            <person name="Carter N.P."/>
            <person name="McVean G."/>
            <person name="Ross M.T."/>
            <person name="Harrow J."/>
            <person name="Olson M.V."/>
            <person name="Beck S."/>
            <person name="Rogers J."/>
            <person name="Bentley D.R."/>
        </authorList>
    </citation>
    <scope>NUCLEOTIDE SEQUENCE [LARGE SCALE GENOMIC DNA]</scope>
</reference>
<reference key="3">
    <citation type="journal article" date="2004" name="Genome Res.">
        <title>The status, quality, and expansion of the NIH full-length cDNA project: the Mammalian Gene Collection (MGC).</title>
        <authorList>
            <consortium name="The MGC Project Team"/>
        </authorList>
    </citation>
    <scope>NUCLEOTIDE SEQUENCE [LARGE SCALE MRNA] (ISOFORMS 1 AND 3)</scope>
    <scope>VARIANT SER-413</scope>
    <source>
        <tissue>Colon</tissue>
        <tissue>Eye</tissue>
    </source>
</reference>
<reference key="4">
    <citation type="journal article" date="2004" name="Nat. Genet.">
        <title>Complete sequencing and characterization of 21,243 full-length human cDNAs.</title>
        <authorList>
            <person name="Ota T."/>
            <person name="Suzuki Y."/>
            <person name="Nishikawa T."/>
            <person name="Otsuki T."/>
            <person name="Sugiyama T."/>
            <person name="Irie R."/>
            <person name="Wakamatsu A."/>
            <person name="Hayashi K."/>
            <person name="Sato H."/>
            <person name="Nagai K."/>
            <person name="Kimura K."/>
            <person name="Makita H."/>
            <person name="Sekine M."/>
            <person name="Obayashi M."/>
            <person name="Nishi T."/>
            <person name="Shibahara T."/>
            <person name="Tanaka T."/>
            <person name="Ishii S."/>
            <person name="Yamamoto J."/>
            <person name="Saito K."/>
            <person name="Kawai Y."/>
            <person name="Isono Y."/>
            <person name="Nakamura Y."/>
            <person name="Nagahari K."/>
            <person name="Murakami K."/>
            <person name="Yasuda T."/>
            <person name="Iwayanagi T."/>
            <person name="Wagatsuma M."/>
            <person name="Shiratori A."/>
            <person name="Sudo H."/>
            <person name="Hosoiri T."/>
            <person name="Kaku Y."/>
            <person name="Kodaira H."/>
            <person name="Kondo H."/>
            <person name="Sugawara M."/>
            <person name="Takahashi M."/>
            <person name="Kanda K."/>
            <person name="Yokoi T."/>
            <person name="Furuya T."/>
            <person name="Kikkawa E."/>
            <person name="Omura Y."/>
            <person name="Abe K."/>
            <person name="Kamihara K."/>
            <person name="Katsuta N."/>
            <person name="Sato K."/>
            <person name="Tanikawa M."/>
            <person name="Yamazaki M."/>
            <person name="Ninomiya K."/>
            <person name="Ishibashi T."/>
            <person name="Yamashita H."/>
            <person name="Murakawa K."/>
            <person name="Fujimori K."/>
            <person name="Tanai H."/>
            <person name="Kimata M."/>
            <person name="Watanabe M."/>
            <person name="Hiraoka S."/>
            <person name="Chiba Y."/>
            <person name="Ishida S."/>
            <person name="Ono Y."/>
            <person name="Takiguchi S."/>
            <person name="Watanabe S."/>
            <person name="Yosida M."/>
            <person name="Hotuta T."/>
            <person name="Kusano J."/>
            <person name="Kanehori K."/>
            <person name="Takahashi-Fujii A."/>
            <person name="Hara H."/>
            <person name="Tanase T.-O."/>
            <person name="Nomura Y."/>
            <person name="Togiya S."/>
            <person name="Komai F."/>
            <person name="Hara R."/>
            <person name="Takeuchi K."/>
            <person name="Arita M."/>
            <person name="Imose N."/>
            <person name="Musashino K."/>
            <person name="Yuuki H."/>
            <person name="Oshima A."/>
            <person name="Sasaki N."/>
            <person name="Aotsuka S."/>
            <person name="Yoshikawa Y."/>
            <person name="Matsunawa H."/>
            <person name="Ichihara T."/>
            <person name="Shiohata N."/>
            <person name="Sano S."/>
            <person name="Moriya S."/>
            <person name="Momiyama H."/>
            <person name="Satoh N."/>
            <person name="Takami S."/>
            <person name="Terashima Y."/>
            <person name="Suzuki O."/>
            <person name="Nakagawa S."/>
            <person name="Senoh A."/>
            <person name="Mizoguchi H."/>
            <person name="Goto Y."/>
            <person name="Shimizu F."/>
            <person name="Wakebe H."/>
            <person name="Hishigaki H."/>
            <person name="Watanabe T."/>
            <person name="Sugiyama A."/>
            <person name="Takemoto M."/>
            <person name="Kawakami B."/>
            <person name="Yamazaki M."/>
            <person name="Watanabe K."/>
            <person name="Kumagai A."/>
            <person name="Itakura S."/>
            <person name="Fukuzumi Y."/>
            <person name="Fujimori Y."/>
            <person name="Komiyama M."/>
            <person name="Tashiro H."/>
            <person name="Tanigami A."/>
            <person name="Fujiwara T."/>
            <person name="Ono T."/>
            <person name="Yamada K."/>
            <person name="Fujii Y."/>
            <person name="Ozaki K."/>
            <person name="Hirao M."/>
            <person name="Ohmori Y."/>
            <person name="Kawabata A."/>
            <person name="Hikiji T."/>
            <person name="Kobatake N."/>
            <person name="Inagaki H."/>
            <person name="Ikema Y."/>
            <person name="Okamoto S."/>
            <person name="Okitani R."/>
            <person name="Kawakami T."/>
            <person name="Noguchi S."/>
            <person name="Itoh T."/>
            <person name="Shigeta K."/>
            <person name="Senba T."/>
            <person name="Matsumura K."/>
            <person name="Nakajima Y."/>
            <person name="Mizuno T."/>
            <person name="Morinaga M."/>
            <person name="Sasaki M."/>
            <person name="Togashi T."/>
            <person name="Oyama M."/>
            <person name="Hata H."/>
            <person name="Watanabe M."/>
            <person name="Komatsu T."/>
            <person name="Mizushima-Sugano J."/>
            <person name="Satoh T."/>
            <person name="Shirai Y."/>
            <person name="Takahashi Y."/>
            <person name="Nakagawa K."/>
            <person name="Okumura K."/>
            <person name="Nagase T."/>
            <person name="Nomura N."/>
            <person name="Kikuchi H."/>
            <person name="Masuho Y."/>
            <person name="Yamashita R."/>
            <person name="Nakai K."/>
            <person name="Yada T."/>
            <person name="Nakamura Y."/>
            <person name="Ohara O."/>
            <person name="Isogai T."/>
            <person name="Sugano S."/>
        </authorList>
    </citation>
    <scope>NUCLEOTIDE SEQUENCE [LARGE SCALE MRNA] OF 352-541 (ISOFORM 1)</scope>
    <source>
        <tissue>Teratocarcinoma</tissue>
    </source>
</reference>
<reference key="5">
    <citation type="journal article" date="2010" name="J. Biol. Chem.">
        <title>ANKRD13C acts as a molecular Chaperone for G protein-coupled receptors.</title>
        <authorList>
            <person name="Parent A."/>
            <person name="Roy S.J."/>
            <person name="Iorio-Morin C."/>
            <person name="Lepine M.C."/>
            <person name="Labrecque P."/>
            <person name="Gallant M.A."/>
            <person name="Slipetz D."/>
            <person name="Parent J.L."/>
        </authorList>
    </citation>
    <scope>FUNCTION</scope>
    <scope>SUBCELLULAR LOCATION</scope>
</reference>
<name>AN13C_HUMAN</name>